<comment type="function">
    <text evidence="1">Catalyzes the condensation of (S)-aspartate-beta-semialdehyde [(S)-ASA] and pyruvate to 4-hydroxy-tetrahydrodipicolinate (HTPA).</text>
</comment>
<comment type="catalytic activity">
    <reaction evidence="1">
        <text>L-aspartate 4-semialdehyde + pyruvate = (2S,4S)-4-hydroxy-2,3,4,5-tetrahydrodipicolinate + H2O + H(+)</text>
        <dbReference type="Rhea" id="RHEA:34171"/>
        <dbReference type="ChEBI" id="CHEBI:15361"/>
        <dbReference type="ChEBI" id="CHEBI:15377"/>
        <dbReference type="ChEBI" id="CHEBI:15378"/>
        <dbReference type="ChEBI" id="CHEBI:67139"/>
        <dbReference type="ChEBI" id="CHEBI:537519"/>
        <dbReference type="EC" id="4.3.3.7"/>
    </reaction>
</comment>
<comment type="pathway">
    <text evidence="1">Amino-acid biosynthesis; L-lysine biosynthesis via DAP pathway; (S)-tetrahydrodipicolinate from L-aspartate: step 3/4.</text>
</comment>
<comment type="subunit">
    <text evidence="1">Homotetramer; dimer of dimers.</text>
</comment>
<comment type="subcellular location">
    <subcellularLocation>
        <location evidence="1">Cytoplasm</location>
    </subcellularLocation>
</comment>
<comment type="similarity">
    <text evidence="1">Belongs to the DapA family.</text>
</comment>
<comment type="caution">
    <text evidence="2">Was originally thought to be a dihydrodipicolinate synthase (DHDPS), catalyzing the condensation of (S)-aspartate-beta-semialdehyde [(S)-ASA] and pyruvate to dihydrodipicolinate (DHDP). However, it was shown in E.coli that the product of the enzymatic reaction is not dihydrodipicolinate but in fact (4S)-4-hydroxy-2,3,4,5-tetrahydro-(2S)-dipicolinic acid (HTPA), and that the consecutive dehydration reaction leading to DHDP is not spontaneous but catalyzed by DapB.</text>
</comment>
<name>DAPA_METM5</name>
<sequence>MQGVYPAIVTPFKDGKVDYDGLRTNIDFLIENGISGVIPVGTTGESPTLTPLEHEKVIENVVEFVDGRVEVIAGTGSNSTSEALEFSQYAEDIGVDGVLLITPYYNKPTQEGLKRHFGEIANSINVPIALYNVPSRTALNIEPETIKYLFEEYSNITAIKEANPNLSQVSEVLDSCNIDVLSGNDELTLPIISLGGKGVVSVIANIAPKEFVQMVDFANAGKFDKAKEIHYKLFPIMKLMFVETNPIPIKTAMNMLGMPSGELRLPLCEMAEGNKLKLQNALNTVGLLK</sequence>
<proteinExistence type="inferred from homology"/>
<keyword id="KW-0028">Amino-acid biosynthesis</keyword>
<keyword id="KW-0963">Cytoplasm</keyword>
<keyword id="KW-0220">Diaminopimelate biosynthesis</keyword>
<keyword id="KW-0456">Lyase</keyword>
<keyword id="KW-0457">Lysine biosynthesis</keyword>
<keyword id="KW-0704">Schiff base</keyword>
<feature type="chain" id="PRO_1000050218" description="4-hydroxy-tetrahydrodipicolinate synthase">
    <location>
        <begin position="1"/>
        <end position="289"/>
    </location>
</feature>
<feature type="active site" description="Proton donor/acceptor" evidence="1">
    <location>
        <position position="131"/>
    </location>
</feature>
<feature type="active site" description="Schiff-base intermediate with substrate" evidence="1">
    <location>
        <position position="160"/>
    </location>
</feature>
<feature type="binding site" evidence="1">
    <location>
        <position position="43"/>
    </location>
    <ligand>
        <name>pyruvate</name>
        <dbReference type="ChEBI" id="CHEBI:15361"/>
    </ligand>
</feature>
<feature type="binding site" evidence="1">
    <location>
        <position position="200"/>
    </location>
    <ligand>
        <name>pyruvate</name>
        <dbReference type="ChEBI" id="CHEBI:15361"/>
    </ligand>
</feature>
<feature type="site" description="Part of a proton relay during catalysis" evidence="1">
    <location>
        <position position="42"/>
    </location>
</feature>
<feature type="site" description="Part of a proton relay during catalysis" evidence="1">
    <location>
        <position position="105"/>
    </location>
</feature>
<organism>
    <name type="scientific">Methanococcus maripaludis (strain C5 / ATCC BAA-1333)</name>
    <dbReference type="NCBI Taxonomy" id="402880"/>
    <lineage>
        <taxon>Archaea</taxon>
        <taxon>Methanobacteriati</taxon>
        <taxon>Methanobacteriota</taxon>
        <taxon>Methanomada group</taxon>
        <taxon>Methanococci</taxon>
        <taxon>Methanococcales</taxon>
        <taxon>Methanococcaceae</taxon>
        <taxon>Methanococcus</taxon>
    </lineage>
</organism>
<protein>
    <recommendedName>
        <fullName evidence="1">4-hydroxy-tetrahydrodipicolinate synthase</fullName>
        <shortName evidence="1">HTPA synthase</shortName>
        <ecNumber evidence="1">4.3.3.7</ecNumber>
    </recommendedName>
</protein>
<reference key="1">
    <citation type="submission" date="2007-03" db="EMBL/GenBank/DDBJ databases">
        <title>Complete sequence of chromosome of Methanococcus maripaludis C5.</title>
        <authorList>
            <consortium name="US DOE Joint Genome Institute"/>
            <person name="Copeland A."/>
            <person name="Lucas S."/>
            <person name="Lapidus A."/>
            <person name="Barry K."/>
            <person name="Glavina del Rio T."/>
            <person name="Dalin E."/>
            <person name="Tice H."/>
            <person name="Pitluck S."/>
            <person name="Chertkov O."/>
            <person name="Brettin T."/>
            <person name="Bruce D."/>
            <person name="Han C."/>
            <person name="Detter J.C."/>
            <person name="Schmutz J."/>
            <person name="Larimer F."/>
            <person name="Land M."/>
            <person name="Hauser L."/>
            <person name="Kyrpides N."/>
            <person name="Mikhailova N."/>
            <person name="Sieprawska-Lupa M."/>
            <person name="Whitman W.B."/>
            <person name="Richardson P."/>
        </authorList>
    </citation>
    <scope>NUCLEOTIDE SEQUENCE [LARGE SCALE GENOMIC DNA]</scope>
    <source>
        <strain>C5 / ATCC BAA-1333</strain>
    </source>
</reference>
<accession>A4FYQ3</accession>
<evidence type="ECO:0000255" key="1">
    <source>
        <dbReference type="HAMAP-Rule" id="MF_00418"/>
    </source>
</evidence>
<evidence type="ECO:0000305" key="2"/>
<dbReference type="EC" id="4.3.3.7" evidence="1"/>
<dbReference type="EMBL" id="CP000609">
    <property type="protein sequence ID" value="ABO35337.1"/>
    <property type="molecule type" value="Genomic_DNA"/>
</dbReference>
<dbReference type="RefSeq" id="WP_011868790.1">
    <property type="nucleotide sequence ID" value="NC_009135.1"/>
</dbReference>
<dbReference type="SMR" id="A4FYQ3"/>
<dbReference type="STRING" id="402880.MmarC5_1031"/>
<dbReference type="GeneID" id="4928502"/>
<dbReference type="KEGG" id="mmq:MmarC5_1031"/>
<dbReference type="eggNOG" id="arCOG04172">
    <property type="taxonomic scope" value="Archaea"/>
</dbReference>
<dbReference type="HOGENOM" id="CLU_049343_7_1_2"/>
<dbReference type="OrthoDB" id="33636at2157"/>
<dbReference type="UniPathway" id="UPA00034">
    <property type="reaction ID" value="UER00017"/>
</dbReference>
<dbReference type="Proteomes" id="UP000000253">
    <property type="component" value="Chromosome"/>
</dbReference>
<dbReference type="GO" id="GO:0005737">
    <property type="term" value="C:cytoplasm"/>
    <property type="evidence" value="ECO:0007669"/>
    <property type="project" value="UniProtKB-SubCell"/>
</dbReference>
<dbReference type="GO" id="GO:0008675">
    <property type="term" value="F:2-dehydro-3-deoxy-phosphogluconate aldolase activity"/>
    <property type="evidence" value="ECO:0007669"/>
    <property type="project" value="UniProtKB-ARBA"/>
</dbReference>
<dbReference type="GO" id="GO:0008840">
    <property type="term" value="F:4-hydroxy-tetrahydrodipicolinate synthase activity"/>
    <property type="evidence" value="ECO:0007669"/>
    <property type="project" value="UniProtKB-UniRule"/>
</dbReference>
<dbReference type="GO" id="GO:0019877">
    <property type="term" value="P:diaminopimelate biosynthetic process"/>
    <property type="evidence" value="ECO:0007669"/>
    <property type="project" value="UniProtKB-UniRule"/>
</dbReference>
<dbReference type="GO" id="GO:0009089">
    <property type="term" value="P:lysine biosynthetic process via diaminopimelate"/>
    <property type="evidence" value="ECO:0007669"/>
    <property type="project" value="UniProtKB-UniRule"/>
</dbReference>
<dbReference type="CDD" id="cd00950">
    <property type="entry name" value="DHDPS"/>
    <property type="match status" value="1"/>
</dbReference>
<dbReference type="Gene3D" id="3.20.20.70">
    <property type="entry name" value="Aldolase class I"/>
    <property type="match status" value="1"/>
</dbReference>
<dbReference type="HAMAP" id="MF_00418">
    <property type="entry name" value="DapA"/>
    <property type="match status" value="1"/>
</dbReference>
<dbReference type="InterPro" id="IPR013785">
    <property type="entry name" value="Aldolase_TIM"/>
</dbReference>
<dbReference type="InterPro" id="IPR005263">
    <property type="entry name" value="DapA"/>
</dbReference>
<dbReference type="InterPro" id="IPR002220">
    <property type="entry name" value="DapA-like"/>
</dbReference>
<dbReference type="InterPro" id="IPR020625">
    <property type="entry name" value="Schiff_base-form_aldolases_AS"/>
</dbReference>
<dbReference type="InterPro" id="IPR020624">
    <property type="entry name" value="Schiff_base-form_aldolases_CS"/>
</dbReference>
<dbReference type="NCBIfam" id="TIGR00674">
    <property type="entry name" value="dapA"/>
    <property type="match status" value="1"/>
</dbReference>
<dbReference type="PANTHER" id="PTHR12128:SF66">
    <property type="entry name" value="4-HYDROXY-2-OXOGLUTARATE ALDOLASE, MITOCHONDRIAL"/>
    <property type="match status" value="1"/>
</dbReference>
<dbReference type="PANTHER" id="PTHR12128">
    <property type="entry name" value="DIHYDRODIPICOLINATE SYNTHASE"/>
    <property type="match status" value="1"/>
</dbReference>
<dbReference type="Pfam" id="PF00701">
    <property type="entry name" value="DHDPS"/>
    <property type="match status" value="1"/>
</dbReference>
<dbReference type="PIRSF" id="PIRSF001365">
    <property type="entry name" value="DHDPS"/>
    <property type="match status" value="1"/>
</dbReference>
<dbReference type="PRINTS" id="PR00146">
    <property type="entry name" value="DHPICSNTHASE"/>
</dbReference>
<dbReference type="SMART" id="SM01130">
    <property type="entry name" value="DHDPS"/>
    <property type="match status" value="1"/>
</dbReference>
<dbReference type="SUPFAM" id="SSF51569">
    <property type="entry name" value="Aldolase"/>
    <property type="match status" value="1"/>
</dbReference>
<dbReference type="PROSITE" id="PS00665">
    <property type="entry name" value="DHDPS_1"/>
    <property type="match status" value="1"/>
</dbReference>
<dbReference type="PROSITE" id="PS00666">
    <property type="entry name" value="DHDPS_2"/>
    <property type="match status" value="1"/>
</dbReference>
<gene>
    <name evidence="1" type="primary">dapA</name>
    <name type="ordered locus">MmarC5_1031</name>
</gene>